<protein>
    <recommendedName>
        <fullName>HTH-type transcriptional regulator CzcR</fullName>
    </recommendedName>
</protein>
<reference key="1">
    <citation type="journal article" date="2006" name="J. Bacteriol.">
        <title>Pathogenomic sequence analysis of Bacillus cereus and Bacillus thuringiensis isolates closely related to Bacillus anthracis.</title>
        <authorList>
            <person name="Han C.S."/>
            <person name="Xie G."/>
            <person name="Challacombe J.F."/>
            <person name="Altherr M.R."/>
            <person name="Bhotika S.S."/>
            <person name="Bruce D."/>
            <person name="Campbell C.S."/>
            <person name="Campbell M.L."/>
            <person name="Chen J."/>
            <person name="Chertkov O."/>
            <person name="Cleland C."/>
            <person name="Dimitrijevic M."/>
            <person name="Doggett N.A."/>
            <person name="Fawcett J.J."/>
            <person name="Glavina T."/>
            <person name="Goodwin L.A."/>
            <person name="Hill K.K."/>
            <person name="Hitchcock P."/>
            <person name="Jackson P.J."/>
            <person name="Keim P."/>
            <person name="Kewalramani A.R."/>
            <person name="Longmire J."/>
            <person name="Lucas S."/>
            <person name="Malfatti S."/>
            <person name="McMurry K."/>
            <person name="Meincke L.J."/>
            <person name="Misra M."/>
            <person name="Moseman B.L."/>
            <person name="Mundt M."/>
            <person name="Munk A.C."/>
            <person name="Okinaka R.T."/>
            <person name="Parson-Quintana B."/>
            <person name="Reilly L.P."/>
            <person name="Richardson P."/>
            <person name="Robinson D.L."/>
            <person name="Rubin E."/>
            <person name="Saunders E."/>
            <person name="Tapia R."/>
            <person name="Tesmer J.G."/>
            <person name="Thayer N."/>
            <person name="Thompson L.S."/>
            <person name="Tice H."/>
            <person name="Ticknor L.O."/>
            <person name="Wills P.L."/>
            <person name="Brettin T.S."/>
            <person name="Gilna P."/>
        </authorList>
    </citation>
    <scope>NUCLEOTIDE SEQUENCE [LARGE SCALE GENOMIC DNA]</scope>
    <source>
        <strain>97-27</strain>
    </source>
</reference>
<gene>
    <name type="primary">czcR</name>
    <name type="ordered locus">BT9727_0191</name>
</gene>
<proteinExistence type="inferred from homology"/>
<accession>Q6HPH4</accession>
<organism>
    <name type="scientific">Bacillus thuringiensis subsp. konkukian (strain 97-27)</name>
    <dbReference type="NCBI Taxonomy" id="281309"/>
    <lineage>
        <taxon>Bacteria</taxon>
        <taxon>Bacillati</taxon>
        <taxon>Bacillota</taxon>
        <taxon>Bacilli</taxon>
        <taxon>Bacillales</taxon>
        <taxon>Bacillaceae</taxon>
        <taxon>Bacillus</taxon>
        <taxon>Bacillus cereus group</taxon>
    </lineage>
</organism>
<comment type="similarity">
    <text evidence="2">Belongs to the LysR transcriptional regulatory family.</text>
</comment>
<sequence length="288" mass="32705">MELRDLQIFQSVADQGSVSSAAKELNYVQSNVTTRIKQLENELKTPLFYRHKRGMTLTAEGRKMLVYVNKILQDVDELKQVFLDSETPSGILKIGTVETVSTLPTILSSYYKSYPNVDLSLQAGLTEELIREVLDHQLDGAFISGPIKHPLIEQYDVSTEKLMLVTQNKAFHIEEFTTTPLLVFNQGCGYRSKLERWLKDEGLLPKRIMEFNILETILNSVALGLGITLVPQSAVHHLSKAGKVHCHAIPEKYGSISTVFIRRKDSYMTNSMRSFLKTIEEHHHINML</sequence>
<dbReference type="EMBL" id="AE017355">
    <property type="protein sequence ID" value="AAT60040.1"/>
    <property type="molecule type" value="Genomic_DNA"/>
</dbReference>
<dbReference type="RefSeq" id="WP_000423058.1">
    <property type="nucleotide sequence ID" value="NC_005957.1"/>
</dbReference>
<dbReference type="RefSeq" id="YP_034546.1">
    <property type="nucleotide sequence ID" value="NC_005957.1"/>
</dbReference>
<dbReference type="SMR" id="Q6HPH4"/>
<dbReference type="KEGG" id="btk:BT9727_0191"/>
<dbReference type="PATRIC" id="fig|281309.8.peg.198"/>
<dbReference type="HOGENOM" id="CLU_039613_6_1_9"/>
<dbReference type="Proteomes" id="UP000001301">
    <property type="component" value="Chromosome"/>
</dbReference>
<dbReference type="GO" id="GO:0003700">
    <property type="term" value="F:DNA-binding transcription factor activity"/>
    <property type="evidence" value="ECO:0007669"/>
    <property type="project" value="InterPro"/>
</dbReference>
<dbReference type="GO" id="GO:0000976">
    <property type="term" value="F:transcription cis-regulatory region binding"/>
    <property type="evidence" value="ECO:0007669"/>
    <property type="project" value="TreeGrafter"/>
</dbReference>
<dbReference type="CDD" id="cd08442">
    <property type="entry name" value="PBP2_YofA_SoxR_like"/>
    <property type="match status" value="1"/>
</dbReference>
<dbReference type="FunFam" id="1.10.10.10:FF:000001">
    <property type="entry name" value="LysR family transcriptional regulator"/>
    <property type="match status" value="1"/>
</dbReference>
<dbReference type="Gene3D" id="3.40.190.290">
    <property type="match status" value="1"/>
</dbReference>
<dbReference type="Gene3D" id="1.10.10.10">
    <property type="entry name" value="Winged helix-like DNA-binding domain superfamily/Winged helix DNA-binding domain"/>
    <property type="match status" value="1"/>
</dbReference>
<dbReference type="InterPro" id="IPR005119">
    <property type="entry name" value="LysR_subst-bd"/>
</dbReference>
<dbReference type="InterPro" id="IPR000847">
    <property type="entry name" value="Tscrpt_reg_HTH_LysR"/>
</dbReference>
<dbReference type="InterPro" id="IPR036388">
    <property type="entry name" value="WH-like_DNA-bd_sf"/>
</dbReference>
<dbReference type="InterPro" id="IPR036390">
    <property type="entry name" value="WH_DNA-bd_sf"/>
</dbReference>
<dbReference type="PANTHER" id="PTHR30126">
    <property type="entry name" value="HTH-TYPE TRANSCRIPTIONAL REGULATOR"/>
    <property type="match status" value="1"/>
</dbReference>
<dbReference type="PANTHER" id="PTHR30126:SF40">
    <property type="entry name" value="HTH-TYPE TRANSCRIPTIONAL REGULATOR GLTR"/>
    <property type="match status" value="1"/>
</dbReference>
<dbReference type="Pfam" id="PF00126">
    <property type="entry name" value="HTH_1"/>
    <property type="match status" value="1"/>
</dbReference>
<dbReference type="Pfam" id="PF03466">
    <property type="entry name" value="LysR_substrate"/>
    <property type="match status" value="1"/>
</dbReference>
<dbReference type="SUPFAM" id="SSF53850">
    <property type="entry name" value="Periplasmic binding protein-like II"/>
    <property type="match status" value="1"/>
</dbReference>
<dbReference type="SUPFAM" id="SSF46785">
    <property type="entry name" value="Winged helix' DNA-binding domain"/>
    <property type="match status" value="1"/>
</dbReference>
<dbReference type="PROSITE" id="PS50931">
    <property type="entry name" value="HTH_LYSR"/>
    <property type="match status" value="1"/>
</dbReference>
<keyword id="KW-0238">DNA-binding</keyword>
<keyword id="KW-0804">Transcription</keyword>
<keyword id="KW-0805">Transcription regulation</keyword>
<name>CZCR_BACHK</name>
<evidence type="ECO:0000255" key="1">
    <source>
        <dbReference type="PROSITE-ProRule" id="PRU00253"/>
    </source>
</evidence>
<evidence type="ECO:0000305" key="2"/>
<feature type="chain" id="PRO_0000334144" description="HTH-type transcriptional regulator CzcR">
    <location>
        <begin position="1"/>
        <end position="288"/>
    </location>
</feature>
<feature type="domain" description="HTH lysR-type" evidence="1">
    <location>
        <begin position="1"/>
        <end position="58"/>
    </location>
</feature>
<feature type="DNA-binding region" description="H-T-H motif" evidence="1">
    <location>
        <begin position="18"/>
        <end position="37"/>
    </location>
</feature>